<feature type="chain" id="PRO_0000374790" description="Ribosomal protein uS12 methylthiotransferase RimO">
    <location>
        <begin position="1"/>
        <end position="444"/>
    </location>
</feature>
<feature type="domain" description="MTTase N-terminal" evidence="1">
    <location>
        <begin position="4"/>
        <end position="118"/>
    </location>
</feature>
<feature type="domain" description="Radical SAM core" evidence="2">
    <location>
        <begin position="141"/>
        <end position="373"/>
    </location>
</feature>
<feature type="domain" description="TRAM" evidence="1">
    <location>
        <begin position="374"/>
        <end position="440"/>
    </location>
</feature>
<feature type="binding site" evidence="1">
    <location>
        <position position="13"/>
    </location>
    <ligand>
        <name>[4Fe-4S] cluster</name>
        <dbReference type="ChEBI" id="CHEBI:49883"/>
        <label>1</label>
    </ligand>
</feature>
<feature type="binding site" evidence="1">
    <location>
        <position position="48"/>
    </location>
    <ligand>
        <name>[4Fe-4S] cluster</name>
        <dbReference type="ChEBI" id="CHEBI:49883"/>
        <label>1</label>
    </ligand>
</feature>
<feature type="binding site" evidence="1">
    <location>
        <position position="81"/>
    </location>
    <ligand>
        <name>[4Fe-4S] cluster</name>
        <dbReference type="ChEBI" id="CHEBI:49883"/>
        <label>1</label>
    </ligand>
</feature>
<feature type="binding site" evidence="1">
    <location>
        <position position="155"/>
    </location>
    <ligand>
        <name>[4Fe-4S] cluster</name>
        <dbReference type="ChEBI" id="CHEBI:49883"/>
        <label>2</label>
        <note>4Fe-4S-S-AdoMet</note>
    </ligand>
</feature>
<feature type="binding site" evidence="1">
    <location>
        <position position="159"/>
    </location>
    <ligand>
        <name>[4Fe-4S] cluster</name>
        <dbReference type="ChEBI" id="CHEBI:49883"/>
        <label>2</label>
        <note>4Fe-4S-S-AdoMet</note>
    </ligand>
</feature>
<feature type="binding site" evidence="1">
    <location>
        <position position="162"/>
    </location>
    <ligand>
        <name>[4Fe-4S] cluster</name>
        <dbReference type="ChEBI" id="CHEBI:49883"/>
        <label>2</label>
        <note>4Fe-4S-S-AdoMet</note>
    </ligand>
</feature>
<proteinExistence type="inferred from homology"/>
<gene>
    <name evidence="1" type="primary">rimO</name>
    <name type="ordered locus">CTC_01287</name>
</gene>
<accession>Q895I7</accession>
<keyword id="KW-0004">4Fe-4S</keyword>
<keyword id="KW-0963">Cytoplasm</keyword>
<keyword id="KW-0408">Iron</keyword>
<keyword id="KW-0411">Iron-sulfur</keyword>
<keyword id="KW-0479">Metal-binding</keyword>
<keyword id="KW-1185">Reference proteome</keyword>
<keyword id="KW-0949">S-adenosyl-L-methionine</keyword>
<keyword id="KW-0808">Transferase</keyword>
<sequence length="444" mass="51082">MTKIKYGVVSLGCDKNRIDSEVMINEIKKEGIITNDPKEADVIIVNTCGFIEDSKKESIDTILEMSNYKNNNCKVLVVTGCLSQRYGEELQELLPEVDVMLGVNDYDKLSDAIKKSIEKGEKSLYCNYSNTVINEGGRVLTTQKHYAYLRIAEGCDNFCTYCAIPKIRGKYRSRKIEDIIEEAKFLSQNGVKEIIIVAQDTTRYGLDIYGEKTLPSLLKQLEEVDGIEWIRLLYCYPEDITEELIEEFARNKKLCKYVDVPIQHISDSVLKRMGRKGNKQLVTKVLRDIKKRVPEMSIRTSLIVGFPGEMEEDFKELKDFVEEFKFQNLGVFKYSQEEGTPAATMEDQVLEEIKETRREELMKMQRDIVKSINADKVNKVYKVVVDNFNGEHYIGRNYEMLPEIDGAIYFKCDKILNIGEMVCIKILETLEYDLIGVVCDESCK</sequence>
<comment type="function">
    <text evidence="1">Catalyzes the methylthiolation of an aspartic acid residue of ribosomal protein uS12.</text>
</comment>
<comment type="catalytic activity">
    <reaction evidence="1">
        <text>L-aspartate(89)-[ribosomal protein uS12]-hydrogen + (sulfur carrier)-SH + AH2 + 2 S-adenosyl-L-methionine = 3-methylsulfanyl-L-aspartate(89)-[ribosomal protein uS12]-hydrogen + (sulfur carrier)-H + 5'-deoxyadenosine + L-methionine + A + S-adenosyl-L-homocysteine + 2 H(+)</text>
        <dbReference type="Rhea" id="RHEA:37087"/>
        <dbReference type="Rhea" id="RHEA-COMP:10460"/>
        <dbReference type="Rhea" id="RHEA-COMP:10461"/>
        <dbReference type="Rhea" id="RHEA-COMP:14737"/>
        <dbReference type="Rhea" id="RHEA-COMP:14739"/>
        <dbReference type="ChEBI" id="CHEBI:13193"/>
        <dbReference type="ChEBI" id="CHEBI:15378"/>
        <dbReference type="ChEBI" id="CHEBI:17319"/>
        <dbReference type="ChEBI" id="CHEBI:17499"/>
        <dbReference type="ChEBI" id="CHEBI:29917"/>
        <dbReference type="ChEBI" id="CHEBI:29961"/>
        <dbReference type="ChEBI" id="CHEBI:57844"/>
        <dbReference type="ChEBI" id="CHEBI:57856"/>
        <dbReference type="ChEBI" id="CHEBI:59789"/>
        <dbReference type="ChEBI" id="CHEBI:64428"/>
        <dbReference type="ChEBI" id="CHEBI:73599"/>
        <dbReference type="EC" id="2.8.4.4"/>
    </reaction>
</comment>
<comment type="cofactor">
    <cofactor evidence="1">
        <name>[4Fe-4S] cluster</name>
        <dbReference type="ChEBI" id="CHEBI:49883"/>
    </cofactor>
    <text evidence="1">Binds 2 [4Fe-4S] clusters. One cluster is coordinated with 3 cysteines and an exchangeable S-adenosyl-L-methionine.</text>
</comment>
<comment type="subcellular location">
    <subcellularLocation>
        <location evidence="1">Cytoplasm</location>
    </subcellularLocation>
</comment>
<comment type="similarity">
    <text evidence="1">Belongs to the methylthiotransferase family. RimO subfamily.</text>
</comment>
<reference key="1">
    <citation type="journal article" date="2003" name="Proc. Natl. Acad. Sci. U.S.A.">
        <title>The genome sequence of Clostridium tetani, the causative agent of tetanus disease.</title>
        <authorList>
            <person name="Brueggemann H."/>
            <person name="Baeumer S."/>
            <person name="Fricke W.F."/>
            <person name="Wiezer A."/>
            <person name="Liesegang H."/>
            <person name="Decker I."/>
            <person name="Herzberg C."/>
            <person name="Martinez-Arias R."/>
            <person name="Merkl R."/>
            <person name="Henne A."/>
            <person name="Gottschalk G."/>
        </authorList>
    </citation>
    <scope>NUCLEOTIDE SEQUENCE [LARGE SCALE GENOMIC DNA]</scope>
    <source>
        <strain>Massachusetts / E88</strain>
    </source>
</reference>
<protein>
    <recommendedName>
        <fullName evidence="1">Ribosomal protein uS12 methylthiotransferase RimO</fullName>
        <shortName evidence="1">uS12 MTTase</shortName>
        <shortName evidence="1">uS12 methylthiotransferase</shortName>
        <ecNumber evidence="1">2.8.4.4</ecNumber>
    </recommendedName>
    <alternativeName>
        <fullName evidence="1">Ribosomal protein uS12 (aspartate-C(3))-methylthiotransferase</fullName>
    </alternativeName>
    <alternativeName>
        <fullName evidence="1">Ribosome maturation factor RimO</fullName>
    </alternativeName>
</protein>
<name>RIMO_CLOTE</name>
<dbReference type="EC" id="2.8.4.4" evidence="1"/>
<dbReference type="EMBL" id="AE015927">
    <property type="protein sequence ID" value="AAO35853.1"/>
    <property type="molecule type" value="Genomic_DNA"/>
</dbReference>
<dbReference type="RefSeq" id="WP_011099515.1">
    <property type="nucleotide sequence ID" value="NC_004557.1"/>
</dbReference>
<dbReference type="SMR" id="Q895I7"/>
<dbReference type="STRING" id="212717.CTC_01287"/>
<dbReference type="GeneID" id="24254464"/>
<dbReference type="KEGG" id="ctc:CTC_01287"/>
<dbReference type="HOGENOM" id="CLU_018697_0_1_9"/>
<dbReference type="OrthoDB" id="9805215at2"/>
<dbReference type="Proteomes" id="UP000001412">
    <property type="component" value="Chromosome"/>
</dbReference>
<dbReference type="GO" id="GO:0005829">
    <property type="term" value="C:cytosol"/>
    <property type="evidence" value="ECO:0007669"/>
    <property type="project" value="TreeGrafter"/>
</dbReference>
<dbReference type="GO" id="GO:0051539">
    <property type="term" value="F:4 iron, 4 sulfur cluster binding"/>
    <property type="evidence" value="ECO:0007669"/>
    <property type="project" value="UniProtKB-UniRule"/>
</dbReference>
<dbReference type="GO" id="GO:0035599">
    <property type="term" value="F:aspartic acid methylthiotransferase activity"/>
    <property type="evidence" value="ECO:0007669"/>
    <property type="project" value="TreeGrafter"/>
</dbReference>
<dbReference type="GO" id="GO:0046872">
    <property type="term" value="F:metal ion binding"/>
    <property type="evidence" value="ECO:0007669"/>
    <property type="project" value="UniProtKB-KW"/>
</dbReference>
<dbReference type="GO" id="GO:0103039">
    <property type="term" value="F:protein methylthiotransferase activity"/>
    <property type="evidence" value="ECO:0007669"/>
    <property type="project" value="UniProtKB-EC"/>
</dbReference>
<dbReference type="GO" id="GO:0006400">
    <property type="term" value="P:tRNA modification"/>
    <property type="evidence" value="ECO:0007669"/>
    <property type="project" value="InterPro"/>
</dbReference>
<dbReference type="CDD" id="cd01335">
    <property type="entry name" value="Radical_SAM"/>
    <property type="match status" value="1"/>
</dbReference>
<dbReference type="FunFam" id="3.80.30.20:FF:000001">
    <property type="entry name" value="tRNA-2-methylthio-N(6)-dimethylallyladenosine synthase 2"/>
    <property type="match status" value="1"/>
</dbReference>
<dbReference type="Gene3D" id="3.40.50.12160">
    <property type="entry name" value="Methylthiotransferase, N-terminal domain"/>
    <property type="match status" value="1"/>
</dbReference>
<dbReference type="Gene3D" id="2.40.50.140">
    <property type="entry name" value="Nucleic acid-binding proteins"/>
    <property type="match status" value="1"/>
</dbReference>
<dbReference type="Gene3D" id="3.80.30.20">
    <property type="entry name" value="tm_1862 like domain"/>
    <property type="match status" value="1"/>
</dbReference>
<dbReference type="HAMAP" id="MF_01865">
    <property type="entry name" value="MTTase_RimO"/>
    <property type="match status" value="1"/>
</dbReference>
<dbReference type="InterPro" id="IPR006638">
    <property type="entry name" value="Elp3/MiaA/NifB-like_rSAM"/>
</dbReference>
<dbReference type="InterPro" id="IPR005839">
    <property type="entry name" value="Methylthiotransferase"/>
</dbReference>
<dbReference type="InterPro" id="IPR020612">
    <property type="entry name" value="Methylthiotransferase_CS"/>
</dbReference>
<dbReference type="InterPro" id="IPR013848">
    <property type="entry name" value="Methylthiotransferase_N"/>
</dbReference>
<dbReference type="InterPro" id="IPR038135">
    <property type="entry name" value="Methylthiotransferase_N_sf"/>
</dbReference>
<dbReference type="InterPro" id="IPR012340">
    <property type="entry name" value="NA-bd_OB-fold"/>
</dbReference>
<dbReference type="InterPro" id="IPR005840">
    <property type="entry name" value="Ribosomal_uS12_MeSTrfase_RimO"/>
</dbReference>
<dbReference type="InterPro" id="IPR007197">
    <property type="entry name" value="rSAM"/>
</dbReference>
<dbReference type="InterPro" id="IPR023404">
    <property type="entry name" value="rSAM_horseshoe"/>
</dbReference>
<dbReference type="InterPro" id="IPR002792">
    <property type="entry name" value="TRAM_dom"/>
</dbReference>
<dbReference type="NCBIfam" id="TIGR01125">
    <property type="entry name" value="30S ribosomal protein S12 methylthiotransferase RimO"/>
    <property type="match status" value="1"/>
</dbReference>
<dbReference type="NCBIfam" id="TIGR00089">
    <property type="entry name" value="MiaB/RimO family radical SAM methylthiotransferase"/>
    <property type="match status" value="1"/>
</dbReference>
<dbReference type="PANTHER" id="PTHR43837">
    <property type="entry name" value="RIBOSOMAL PROTEIN S12 METHYLTHIOTRANSFERASE RIMO"/>
    <property type="match status" value="1"/>
</dbReference>
<dbReference type="PANTHER" id="PTHR43837:SF1">
    <property type="entry name" value="RIBOSOMAL PROTEIN US12 METHYLTHIOTRANSFERASE RIMO"/>
    <property type="match status" value="1"/>
</dbReference>
<dbReference type="Pfam" id="PF04055">
    <property type="entry name" value="Radical_SAM"/>
    <property type="match status" value="1"/>
</dbReference>
<dbReference type="Pfam" id="PF18693">
    <property type="entry name" value="TRAM_2"/>
    <property type="match status" value="1"/>
</dbReference>
<dbReference type="Pfam" id="PF00919">
    <property type="entry name" value="UPF0004"/>
    <property type="match status" value="1"/>
</dbReference>
<dbReference type="SFLD" id="SFLDG01082">
    <property type="entry name" value="B12-binding_domain_containing"/>
    <property type="match status" value="1"/>
</dbReference>
<dbReference type="SFLD" id="SFLDG01061">
    <property type="entry name" value="methylthiotransferase"/>
    <property type="match status" value="1"/>
</dbReference>
<dbReference type="SFLD" id="SFLDF00274">
    <property type="entry name" value="ribosomal_protein_S12_methylth"/>
    <property type="match status" value="1"/>
</dbReference>
<dbReference type="SMART" id="SM00729">
    <property type="entry name" value="Elp3"/>
    <property type="match status" value="1"/>
</dbReference>
<dbReference type="SUPFAM" id="SSF102114">
    <property type="entry name" value="Radical SAM enzymes"/>
    <property type="match status" value="1"/>
</dbReference>
<dbReference type="PROSITE" id="PS51449">
    <property type="entry name" value="MTTASE_N"/>
    <property type="match status" value="1"/>
</dbReference>
<dbReference type="PROSITE" id="PS01278">
    <property type="entry name" value="MTTASE_RADICAL"/>
    <property type="match status" value="1"/>
</dbReference>
<dbReference type="PROSITE" id="PS51918">
    <property type="entry name" value="RADICAL_SAM"/>
    <property type="match status" value="1"/>
</dbReference>
<evidence type="ECO:0000255" key="1">
    <source>
        <dbReference type="HAMAP-Rule" id="MF_01865"/>
    </source>
</evidence>
<evidence type="ECO:0000255" key="2">
    <source>
        <dbReference type="PROSITE-ProRule" id="PRU01266"/>
    </source>
</evidence>
<organism>
    <name type="scientific">Clostridium tetani (strain Massachusetts / E88)</name>
    <dbReference type="NCBI Taxonomy" id="212717"/>
    <lineage>
        <taxon>Bacteria</taxon>
        <taxon>Bacillati</taxon>
        <taxon>Bacillota</taxon>
        <taxon>Clostridia</taxon>
        <taxon>Eubacteriales</taxon>
        <taxon>Clostridiaceae</taxon>
        <taxon>Clostridium</taxon>
    </lineage>
</organism>